<keyword id="KW-0217">Developmental protein</keyword>
<keyword id="KW-0238">DNA-binding</keyword>
<keyword id="KW-0371">Homeobox</keyword>
<keyword id="KW-0524">Neurogenesis</keyword>
<keyword id="KW-0539">Nucleus</keyword>
<keyword id="KW-1185">Reference proteome</keyword>
<keyword id="KW-0804">Transcription</keyword>
<keyword id="KW-0805">Transcription regulation</keyword>
<dbReference type="EMBL" id="FO080278">
    <property type="protein sequence ID" value="CCD62550.1"/>
    <property type="molecule type" value="Genomic_DNA"/>
</dbReference>
<dbReference type="EMBL" id="L19249">
    <property type="protein sequence ID" value="AAC37167.1"/>
    <property type="molecule type" value="mRNA"/>
</dbReference>
<dbReference type="PIR" id="S44907">
    <property type="entry name" value="S44907"/>
</dbReference>
<dbReference type="RefSeq" id="NP_498700.1">
    <property type="nucleotide sequence ID" value="NM_066299.4"/>
</dbReference>
<dbReference type="SMR" id="P34663"/>
<dbReference type="BioGRID" id="41304">
    <property type="interactions" value="11"/>
</dbReference>
<dbReference type="FunCoup" id="P34663">
    <property type="interactions" value="131"/>
</dbReference>
<dbReference type="IntAct" id="P34663">
    <property type="interactions" value="11"/>
</dbReference>
<dbReference type="STRING" id="6239.ZK652.5.1"/>
<dbReference type="PaxDb" id="6239-ZK652.5"/>
<dbReference type="EnsemblMetazoa" id="ZK652.5.1">
    <property type="protein sequence ID" value="ZK652.5.1"/>
    <property type="gene ID" value="WBGene00000446"/>
</dbReference>
<dbReference type="GeneID" id="176096"/>
<dbReference type="KEGG" id="cel:CELE_ZK652.5"/>
<dbReference type="UCSC" id="ZK652.5">
    <property type="organism name" value="c. elegans"/>
</dbReference>
<dbReference type="AGR" id="WB:WBGene00000446"/>
<dbReference type="CTD" id="176096"/>
<dbReference type="WormBase" id="ZK652.5">
    <property type="protein sequence ID" value="CE00451"/>
    <property type="gene ID" value="WBGene00000446"/>
    <property type="gene designation" value="ceh-23"/>
</dbReference>
<dbReference type="eggNOG" id="KOG0843">
    <property type="taxonomic scope" value="Eukaryota"/>
</dbReference>
<dbReference type="HOGENOM" id="CLU_078608_0_0_1"/>
<dbReference type="InParanoid" id="P34663"/>
<dbReference type="OMA" id="YSETNME"/>
<dbReference type="OrthoDB" id="6159439at2759"/>
<dbReference type="PhylomeDB" id="P34663"/>
<dbReference type="SignaLink" id="P34663"/>
<dbReference type="PRO" id="PR:P34663"/>
<dbReference type="Proteomes" id="UP000001940">
    <property type="component" value="Chromosome III"/>
</dbReference>
<dbReference type="Bgee" id="WBGene00000446">
    <property type="expression patterns" value="Expressed in larva"/>
</dbReference>
<dbReference type="GO" id="GO:0005634">
    <property type="term" value="C:nucleus"/>
    <property type="evidence" value="ECO:0000314"/>
    <property type="project" value="WormBase"/>
</dbReference>
<dbReference type="GO" id="GO:0000981">
    <property type="term" value="F:DNA-binding transcription factor activity, RNA polymerase II-specific"/>
    <property type="evidence" value="ECO:0000318"/>
    <property type="project" value="GO_Central"/>
</dbReference>
<dbReference type="GO" id="GO:0000978">
    <property type="term" value="F:RNA polymerase II cis-regulatory region sequence-specific DNA binding"/>
    <property type="evidence" value="ECO:0000318"/>
    <property type="project" value="GO_Central"/>
</dbReference>
<dbReference type="GO" id="GO:0030154">
    <property type="term" value="P:cell differentiation"/>
    <property type="evidence" value="ECO:0000318"/>
    <property type="project" value="GO_Central"/>
</dbReference>
<dbReference type="GO" id="GO:0008340">
    <property type="term" value="P:determination of adult lifespan"/>
    <property type="evidence" value="ECO:0000316"/>
    <property type="project" value="WormBase"/>
</dbReference>
<dbReference type="GO" id="GO:0010629">
    <property type="term" value="P:negative regulation of gene expression"/>
    <property type="evidence" value="ECO:0000316"/>
    <property type="project" value="UniProtKB"/>
</dbReference>
<dbReference type="GO" id="GO:0030182">
    <property type="term" value="P:neuron differentiation"/>
    <property type="evidence" value="ECO:0000315"/>
    <property type="project" value="WormBase"/>
</dbReference>
<dbReference type="GO" id="GO:0010628">
    <property type="term" value="P:positive regulation of gene expression"/>
    <property type="evidence" value="ECO:0000316"/>
    <property type="project" value="UniProtKB"/>
</dbReference>
<dbReference type="GO" id="GO:0045944">
    <property type="term" value="P:positive regulation of transcription by RNA polymerase II"/>
    <property type="evidence" value="ECO:0000315"/>
    <property type="project" value="WormBase"/>
</dbReference>
<dbReference type="GO" id="GO:0006357">
    <property type="term" value="P:regulation of transcription by RNA polymerase II"/>
    <property type="evidence" value="ECO:0000318"/>
    <property type="project" value="GO_Central"/>
</dbReference>
<dbReference type="CDD" id="cd00086">
    <property type="entry name" value="homeodomain"/>
    <property type="match status" value="1"/>
</dbReference>
<dbReference type="FunFam" id="1.10.10.60:FF:000821">
    <property type="entry name" value="Notochord homeobox"/>
    <property type="match status" value="1"/>
</dbReference>
<dbReference type="Gene3D" id="1.10.10.60">
    <property type="entry name" value="Homeodomain-like"/>
    <property type="match status" value="1"/>
</dbReference>
<dbReference type="InterPro" id="IPR050877">
    <property type="entry name" value="EMX-VAX-Noto_Homeobox_TFs"/>
</dbReference>
<dbReference type="InterPro" id="IPR001356">
    <property type="entry name" value="HD"/>
</dbReference>
<dbReference type="InterPro" id="IPR017970">
    <property type="entry name" value="Homeobox_CS"/>
</dbReference>
<dbReference type="InterPro" id="IPR009057">
    <property type="entry name" value="Homeodomain-like_sf"/>
</dbReference>
<dbReference type="InterPro" id="IPR000047">
    <property type="entry name" value="HTH_motif"/>
</dbReference>
<dbReference type="PANTHER" id="PTHR24339:SF28">
    <property type="entry name" value="E5-RELATED"/>
    <property type="match status" value="1"/>
</dbReference>
<dbReference type="PANTHER" id="PTHR24339">
    <property type="entry name" value="HOMEOBOX PROTEIN EMX-RELATED"/>
    <property type="match status" value="1"/>
</dbReference>
<dbReference type="Pfam" id="PF00046">
    <property type="entry name" value="Homeodomain"/>
    <property type="match status" value="1"/>
</dbReference>
<dbReference type="PRINTS" id="PR00031">
    <property type="entry name" value="HTHREPRESSR"/>
</dbReference>
<dbReference type="SMART" id="SM00389">
    <property type="entry name" value="HOX"/>
    <property type="match status" value="1"/>
</dbReference>
<dbReference type="SUPFAM" id="SSF46689">
    <property type="entry name" value="Homeodomain-like"/>
    <property type="match status" value="1"/>
</dbReference>
<dbReference type="PROSITE" id="PS00027">
    <property type="entry name" value="HOMEOBOX_1"/>
    <property type="match status" value="1"/>
</dbReference>
<dbReference type="PROSITE" id="PS50071">
    <property type="entry name" value="HOMEOBOX_2"/>
    <property type="match status" value="1"/>
</dbReference>
<comment type="function">
    <text evidence="3 4 5 6">Probable transcription factor (PubMed:11493519). Required for differentiation of AIY interneurons, acting downstream of LIM/homeobox protein ttx-3 (PubMed:11493519). Modulates gene expression, acting downstream of AMP kinase aak-2/AMPK signaling (PubMed:28560849). Modulates lifespan (PubMed:21713031, PubMed:28560849).</text>
</comment>
<comment type="subcellular location">
    <subcellularLocation>
        <location evidence="4">Nucleus</location>
    </subcellularLocation>
</comment>
<comment type="disruption phenotype">
    <text evidence="3 4 5">Viable and display no obvious neuroanatomical, morphological or locomotory abnormalities (PubMed:11493519). Lifespan reduced in an isp-1 or nuo-6 mutant background and extends lifespan in the short-lived gas-1 and mev-1 mutants (PubMed:21713031, PubMed:28560849). Expression of the G protein-coupled receptor sra-11 is normal in AIY neurons at the larval L1 stage, but drastically reduced in adults (PubMed:11493519). RNAi-mediated knockdown reduces lifespan in various mitochondrial mutant backgrounds, including isp-1;ctb-1, or clk-1 (PubMed:21713031).</text>
</comment>
<comment type="similarity">
    <text evidence="7">Belongs to the distal-less homeobox family.</text>
</comment>
<evidence type="ECO:0000255" key="1">
    <source>
        <dbReference type="PROSITE-ProRule" id="PRU00108"/>
    </source>
</evidence>
<evidence type="ECO:0000256" key="2">
    <source>
        <dbReference type="SAM" id="MobiDB-lite"/>
    </source>
</evidence>
<evidence type="ECO:0000269" key="3">
    <source>
    </source>
</evidence>
<evidence type="ECO:0000269" key="4">
    <source>
    </source>
</evidence>
<evidence type="ECO:0000269" key="5">
    <source>
    </source>
</evidence>
<evidence type="ECO:0000303" key="6">
    <source>
    </source>
</evidence>
<evidence type="ECO:0000305" key="7"/>
<feature type="chain" id="PRO_0000048993" description="Homeobox protein ceh-23">
    <location>
        <begin position="1"/>
        <end position="305"/>
    </location>
</feature>
<feature type="DNA-binding region" description="Homeobox" evidence="1">
    <location>
        <begin position="211"/>
        <end position="270"/>
    </location>
</feature>
<feature type="region of interest" description="Disordered" evidence="2">
    <location>
        <begin position="113"/>
        <end position="140"/>
    </location>
</feature>
<feature type="region of interest" description="Disordered" evidence="2">
    <location>
        <begin position="262"/>
        <end position="305"/>
    </location>
</feature>
<feature type="compositionally biased region" description="Polar residues" evidence="2">
    <location>
        <begin position="120"/>
        <end position="135"/>
    </location>
</feature>
<feature type="compositionally biased region" description="Acidic residues" evidence="2">
    <location>
        <begin position="287"/>
        <end position="305"/>
    </location>
</feature>
<protein>
    <recommendedName>
        <fullName>Homeobox protein ceh-23</fullName>
    </recommendedName>
</protein>
<sequence length="305" mass="33261">MDTHLPFQTLPVSTPLPVSSSSLTDVLQTIAALQACPTSCIPSTSTGMLSPNLPFSATIPRVNLFPPSQPANSLILPTIPAQPFIPNPSLLQANPSAVEALANALFATTSRRASCPEPPASSQATVTLQVPSTGSPERRRYSETNMEVLLREQLAQLMPPTSQLPGMPGCYYQHVPAAGTSGIQGSLDAALMGAVPLAMNSMAHSRRAANHRKARTIYGTTQTQQLEDMFKGQMYVVGAERENLAQRLGLSPSQVRIWFQNRRSKHRRKQQEEQQSTTLEEKSEEIGKDEEEDDEEDEDDVKVLN</sequence>
<organism>
    <name type="scientific">Caenorhabditis elegans</name>
    <dbReference type="NCBI Taxonomy" id="6239"/>
    <lineage>
        <taxon>Eukaryota</taxon>
        <taxon>Metazoa</taxon>
        <taxon>Ecdysozoa</taxon>
        <taxon>Nematoda</taxon>
        <taxon>Chromadorea</taxon>
        <taxon>Rhabditida</taxon>
        <taxon>Rhabditina</taxon>
        <taxon>Rhabditomorpha</taxon>
        <taxon>Rhabditoidea</taxon>
        <taxon>Rhabditidae</taxon>
        <taxon>Peloderinae</taxon>
        <taxon>Caenorhabditis</taxon>
    </lineage>
</organism>
<name>HM23_CAEEL</name>
<accession>P34663</accession>
<accession>Q9TYD8</accession>
<proteinExistence type="evidence at transcript level"/>
<gene>
    <name type="primary">ceh-23</name>
    <name type="ORF">ZK652.5</name>
</gene>
<reference key="1">
    <citation type="journal article" date="1994" name="Nature">
        <title>2.2 Mb of contiguous nucleotide sequence from chromosome III of C. elegans.</title>
        <authorList>
            <person name="Wilson R."/>
            <person name="Ainscough R."/>
            <person name="Anderson K."/>
            <person name="Baynes C."/>
            <person name="Berks M."/>
            <person name="Bonfield J."/>
            <person name="Burton J."/>
            <person name="Connell M."/>
            <person name="Copsey T."/>
            <person name="Cooper J."/>
            <person name="Coulson A."/>
            <person name="Craxton M."/>
            <person name="Dear S."/>
            <person name="Du Z."/>
            <person name="Durbin R."/>
            <person name="Favello A."/>
            <person name="Fraser A."/>
            <person name="Fulton L."/>
            <person name="Gardner A."/>
            <person name="Green P."/>
            <person name="Hawkins T."/>
            <person name="Hillier L."/>
            <person name="Jier M."/>
            <person name="Johnston L."/>
            <person name="Jones M."/>
            <person name="Kershaw J."/>
            <person name="Kirsten J."/>
            <person name="Laisster N."/>
            <person name="Latreille P."/>
            <person name="Lightning J."/>
            <person name="Lloyd C."/>
            <person name="Mortimore B."/>
            <person name="O'Callaghan M."/>
            <person name="Parsons J."/>
            <person name="Percy C."/>
            <person name="Rifken L."/>
            <person name="Roopra A."/>
            <person name="Saunders D."/>
            <person name="Shownkeen R."/>
            <person name="Sims M."/>
            <person name="Smaldon N."/>
            <person name="Smith A."/>
            <person name="Smith M."/>
            <person name="Sonnhammer E."/>
            <person name="Staden R."/>
            <person name="Sulston J."/>
            <person name="Thierry-Mieg J."/>
            <person name="Thomas K."/>
            <person name="Vaudin M."/>
            <person name="Vaughan K."/>
            <person name="Waterston R."/>
            <person name="Watson A."/>
            <person name="Weinstock L."/>
            <person name="Wilkinson-Sproat J."/>
            <person name="Wohldman P."/>
        </authorList>
    </citation>
    <scope>NUCLEOTIDE SEQUENCE [LARGE SCALE GENOMIC DNA]</scope>
    <source>
        <strain>Bristol N2</strain>
    </source>
</reference>
<reference key="2">
    <citation type="journal article" date="1998" name="Science">
        <title>Genome sequence of the nematode C. elegans: a platform for investigating biology.</title>
        <authorList>
            <consortium name="The C. elegans sequencing consortium"/>
        </authorList>
    </citation>
    <scope>NUCLEOTIDE SEQUENCE [LARGE SCALE GENOMIC DNA]</scope>
    <source>
        <strain>Bristol N2</strain>
    </source>
</reference>
<reference key="3">
    <citation type="journal article" date="1993" name="Cell">
        <title>A homeotic gene cluster patterns the anteroposterior body axis of C. elegans.</title>
        <authorList>
            <person name="Wang B.B."/>
            <person name="Mueller-Immergluck M.M."/>
            <person name="Austin J."/>
            <person name="Robinson N.T."/>
            <person name="Chisholm A.D."/>
            <person name="Kenyon C."/>
        </authorList>
    </citation>
    <scope>NUCLEOTIDE SEQUENCE [MRNA] OF 3-305</scope>
</reference>
<reference key="4">
    <citation type="journal article" date="2001" name="Development">
        <title>A regulatory cascade of three homeobox genes, ceh-10, ttx-3 and ceh-23, controls cell fate specification of a defined interneuron class in C. elegans.</title>
        <authorList>
            <person name="Altun-Gultekin Z."/>
            <person name="Andachi Y."/>
            <person name="Tsalik E.L."/>
            <person name="Pilgrim D."/>
            <person name="Kohara Y."/>
            <person name="Hobert O."/>
        </authorList>
    </citation>
    <scope>FUNCTION</scope>
    <scope>DISRUPTION PHENOTYPE</scope>
</reference>
<reference key="5">
    <citation type="journal article" date="2011" name="PLoS Biol.">
        <title>The homeobox protein CEH-23 mediates prolonged longevity in response to impaired mitochondrial electron transport chain in C. elegans.</title>
        <authorList>
            <person name="Walter L."/>
            <person name="Baruah A."/>
            <person name="Chang H.W."/>
            <person name="Pace H.M."/>
            <person name="Lee S.S."/>
        </authorList>
    </citation>
    <scope>FUNCTION</scope>
    <scope>SUBCELLULAR LOCATION</scope>
    <scope>DISRUPTION PHENOTYPE</scope>
</reference>
<reference key="6">
    <citation type="journal article" date="2017" name="Aging Cell">
        <title>Transcription factors CEP-1/p53 and CEH-23 collaborate with AAK-2/AMPK to modulate longevity in Caenorhabditis elegans.</title>
        <authorList>
            <person name="Chang H.W."/>
            <person name="Pisano S."/>
            <person name="Chaturbedi A."/>
            <person name="Chen J."/>
            <person name="Gordon S."/>
            <person name="Baruah A."/>
            <person name="Lee S.S."/>
        </authorList>
    </citation>
    <scope>FUNCTION</scope>
    <scope>DISRUPTION PHENOTYPE</scope>
</reference>